<gene>
    <name type="primary">pes-10</name>
    <name type="ORF">Y46G5A.27</name>
</gene>
<feature type="chain" id="PRO_0000058316" description="Patterned expression site protein 10">
    <location>
        <begin position="1"/>
        <end position="407"/>
    </location>
</feature>
<name>PES10_CAEEL</name>
<accession>P41991</accession>
<dbReference type="EMBL" id="U15304">
    <property type="protein sequence ID" value="AAA50369.1"/>
    <property type="molecule type" value="mRNA"/>
</dbReference>
<dbReference type="EMBL" id="AL110485">
    <property type="protein sequence ID" value="CAB60370.1"/>
    <property type="molecule type" value="Genomic_DNA"/>
</dbReference>
<dbReference type="RefSeq" id="NP_496732.1">
    <property type="nucleotide sequence ID" value="NM_064331.7"/>
</dbReference>
<dbReference type="FunCoup" id="P41991">
    <property type="interactions" value="1038"/>
</dbReference>
<dbReference type="STRING" id="6239.Y46G5A.27.1"/>
<dbReference type="PaxDb" id="6239-Y46G5A.27"/>
<dbReference type="EnsemblMetazoa" id="Y46G5A.27.1">
    <property type="protein sequence ID" value="Y46G5A.27.1"/>
    <property type="gene ID" value="WBGene00003983"/>
</dbReference>
<dbReference type="GeneID" id="174920"/>
<dbReference type="KEGG" id="cel:CELE_Y46G5A.27"/>
<dbReference type="UCSC" id="Y46G5A.27">
    <property type="organism name" value="c. elegans"/>
</dbReference>
<dbReference type="AGR" id="WB:WBGene00003983"/>
<dbReference type="CTD" id="174920"/>
<dbReference type="WormBase" id="Y46G5A.27">
    <property type="protein sequence ID" value="CE21976"/>
    <property type="gene ID" value="WBGene00003983"/>
    <property type="gene designation" value="pes-10"/>
</dbReference>
<dbReference type="eggNOG" id="ENOG502TIXV">
    <property type="taxonomic scope" value="Eukaryota"/>
</dbReference>
<dbReference type="GeneTree" id="ENSGT00970000196847"/>
<dbReference type="HOGENOM" id="CLU_676582_0_0_1"/>
<dbReference type="InParanoid" id="P41991"/>
<dbReference type="OrthoDB" id="5911094at2759"/>
<dbReference type="PhylomeDB" id="P41991"/>
<dbReference type="PRO" id="PR:P41991"/>
<dbReference type="Proteomes" id="UP000001940">
    <property type="component" value="Chromosome II"/>
</dbReference>
<dbReference type="Bgee" id="WBGene00003983">
    <property type="expression patterns" value="Expressed in embryo and 6 other cell types or tissues"/>
</dbReference>
<dbReference type="GO" id="GO:0005737">
    <property type="term" value="C:cytoplasm"/>
    <property type="evidence" value="ECO:0000314"/>
    <property type="project" value="UniProtKB"/>
</dbReference>
<dbReference type="GO" id="GO:0005634">
    <property type="term" value="C:nucleus"/>
    <property type="evidence" value="ECO:0000314"/>
    <property type="project" value="UniProtKB"/>
</dbReference>
<dbReference type="InterPro" id="IPR009819">
    <property type="entry name" value="Pes-10"/>
</dbReference>
<dbReference type="Pfam" id="PF07149">
    <property type="entry name" value="Pes-10"/>
    <property type="match status" value="1"/>
</dbReference>
<keyword id="KW-0963">Cytoplasm</keyword>
<keyword id="KW-0539">Nucleus</keyword>
<keyword id="KW-1185">Reference proteome</keyword>
<organism>
    <name type="scientific">Caenorhabditis elegans</name>
    <dbReference type="NCBI Taxonomy" id="6239"/>
    <lineage>
        <taxon>Eukaryota</taxon>
        <taxon>Metazoa</taxon>
        <taxon>Ecdysozoa</taxon>
        <taxon>Nematoda</taxon>
        <taxon>Chromadorea</taxon>
        <taxon>Rhabditida</taxon>
        <taxon>Rhabditina</taxon>
        <taxon>Rhabditomorpha</taxon>
        <taxon>Rhabditoidea</taxon>
        <taxon>Rhabditidae</taxon>
        <taxon>Peloderinae</taxon>
        <taxon>Caenorhabditis</taxon>
    </lineage>
</organism>
<proteinExistence type="evidence at transcript level"/>
<protein>
    <recommendedName>
        <fullName>Patterned expression site protein 10</fullName>
    </recommendedName>
</protein>
<reference key="1">
    <citation type="submission" date="1994-09" db="EMBL/GenBank/DDBJ databases">
        <authorList>
            <person name="Seydoux G."/>
        </authorList>
    </citation>
    <scope>NUCLEOTIDE SEQUENCE [MRNA]</scope>
    <source>
        <strain>Bristol N2</strain>
    </source>
</reference>
<reference key="2">
    <citation type="journal article" date="1998" name="Science">
        <title>Genome sequence of the nematode C. elegans: a platform for investigating biology.</title>
        <authorList>
            <consortium name="The C. elegans sequencing consortium"/>
        </authorList>
    </citation>
    <scope>NUCLEOTIDE SEQUENCE [LARGE SCALE GENOMIC DNA]</scope>
    <source>
        <strain>Bristol N2</strain>
    </source>
</reference>
<reference key="3">
    <citation type="journal article" date="1994" name="Development">
        <title>Soma-germline asymmetry in the distributions of embryonic RNAs in Caenorhabditis elegans.</title>
        <authorList>
            <person name="Seydoux G."/>
            <person name="Fire A."/>
        </authorList>
    </citation>
    <scope>SUBCELLULAR LOCATION</scope>
    <scope>TISSUE SPECIFICITY</scope>
    <scope>DEVELOPMENTAL STAGE</scope>
</reference>
<sequence>MNKNEYMMHLLARTIRTRNDDMITPLITQLADMQVSMDILEKHNFPALVAEYAPFNKAAQSLSHSVLVWKNDELAQEKSYMLKEFVRICKDQHQPEEFLLRLTCSLINLNDFELTRSCFDIIVSFGLTLNAYDEFGIFRKAMEYQGQMEEADKIISDVDAMLLRNEFLEEDEAEEQADNEMDAFEEEGVEEVDQEVVDFNDNESVISETESGVFTDEELDMEDHAEVMRRHAQDQALVSEICMVFLAGCIKSGRSDVISAAIQFTGAFFYPLALLRKYDIQYLIYCYGSHNEDAELLMNHIKHLQAIEIAGERQEFFKMFMETTFRNAETVTDSVMAQMKGFLEDGDDFMISCTLHVFLKMPITLSQFKNSHVEACLENLESGLAAQLGFMLKMKIQLLEQIDYEIW</sequence>
<comment type="subcellular location">
    <subcellularLocation>
        <location evidence="1">Nucleus</location>
    </subcellularLocation>
    <subcellularLocation>
        <location evidence="1">Cytoplasm</location>
    </subcellularLocation>
</comment>
<comment type="tissue specificity">
    <text evidence="1">In the embryo, expressed in newly arisen somatic blastomeres.</text>
</comment>
<comment type="developmental stage">
    <text evidence="1">Expressed in the somatic lineage from the 4-cell to 60-cell stage.</text>
</comment>
<comment type="similarity">
    <text evidence="2">Belongs to the Pes-10 family.</text>
</comment>
<evidence type="ECO:0000269" key="1">
    <source>
    </source>
</evidence>
<evidence type="ECO:0000305" key="2"/>